<reference key="1">
    <citation type="journal article" date="2001" name="Genome Res.">
        <title>The complete genome sequence of the lactic acid bacterium Lactococcus lactis ssp. lactis IL1403.</title>
        <authorList>
            <person name="Bolotin A."/>
            <person name="Wincker P."/>
            <person name="Mauger S."/>
            <person name="Jaillon O."/>
            <person name="Malarme K."/>
            <person name="Weissenbach J."/>
            <person name="Ehrlich S.D."/>
            <person name="Sorokin A."/>
        </authorList>
    </citation>
    <scope>NUCLEOTIDE SEQUENCE [LARGE SCALE GENOMIC DNA]</scope>
    <source>
        <strain>IL1403</strain>
    </source>
</reference>
<feature type="chain" id="PRO_0000178786" description="Lipoprotein signal peptidase">
    <location>
        <begin position="1"/>
        <end position="150"/>
    </location>
</feature>
<feature type="transmembrane region" description="Helical" evidence="1">
    <location>
        <begin position="5"/>
        <end position="25"/>
    </location>
</feature>
<feature type="transmembrane region" description="Helical" evidence="1">
    <location>
        <begin position="59"/>
        <end position="79"/>
    </location>
</feature>
<feature type="transmembrane region" description="Helical" evidence="1">
    <location>
        <begin position="83"/>
        <end position="103"/>
    </location>
</feature>
<feature type="transmembrane region" description="Helical" evidence="1">
    <location>
        <begin position="124"/>
        <end position="144"/>
    </location>
</feature>
<feature type="active site" evidence="1">
    <location>
        <position position="113"/>
    </location>
</feature>
<feature type="active site" evidence="1">
    <location>
        <position position="129"/>
    </location>
</feature>
<dbReference type="EC" id="3.4.23.36" evidence="1"/>
<dbReference type="EMBL" id="AE005176">
    <property type="protein sequence ID" value="AAK05095.1"/>
    <property type="molecule type" value="Genomic_DNA"/>
</dbReference>
<dbReference type="PIR" id="E86749">
    <property type="entry name" value="E86749"/>
</dbReference>
<dbReference type="RefSeq" id="NP_267153.1">
    <property type="nucleotide sequence ID" value="NC_002662.1"/>
</dbReference>
<dbReference type="RefSeq" id="WP_003130994.1">
    <property type="nucleotide sequence ID" value="NC_002662.1"/>
</dbReference>
<dbReference type="SMR" id="Q9CGU5"/>
<dbReference type="PaxDb" id="272623-L0335"/>
<dbReference type="EnsemblBacteria" id="AAK05095">
    <property type="protein sequence ID" value="AAK05095"/>
    <property type="gene ID" value="L0335"/>
</dbReference>
<dbReference type="KEGG" id="lla:L0335"/>
<dbReference type="PATRIC" id="fig|272623.7.peg.1066"/>
<dbReference type="eggNOG" id="COG0597">
    <property type="taxonomic scope" value="Bacteria"/>
</dbReference>
<dbReference type="HOGENOM" id="CLU_083252_3_2_9"/>
<dbReference type="OrthoDB" id="9810259at2"/>
<dbReference type="UniPathway" id="UPA00665"/>
<dbReference type="Proteomes" id="UP000002196">
    <property type="component" value="Chromosome"/>
</dbReference>
<dbReference type="GO" id="GO:0005886">
    <property type="term" value="C:plasma membrane"/>
    <property type="evidence" value="ECO:0007669"/>
    <property type="project" value="UniProtKB-SubCell"/>
</dbReference>
<dbReference type="GO" id="GO:0004190">
    <property type="term" value="F:aspartic-type endopeptidase activity"/>
    <property type="evidence" value="ECO:0007669"/>
    <property type="project" value="UniProtKB-UniRule"/>
</dbReference>
<dbReference type="GO" id="GO:0006508">
    <property type="term" value="P:proteolysis"/>
    <property type="evidence" value="ECO:0007669"/>
    <property type="project" value="UniProtKB-KW"/>
</dbReference>
<dbReference type="HAMAP" id="MF_00161">
    <property type="entry name" value="LspA"/>
    <property type="match status" value="1"/>
</dbReference>
<dbReference type="InterPro" id="IPR001872">
    <property type="entry name" value="Peptidase_A8"/>
</dbReference>
<dbReference type="NCBIfam" id="TIGR00077">
    <property type="entry name" value="lspA"/>
    <property type="match status" value="1"/>
</dbReference>
<dbReference type="PANTHER" id="PTHR33695">
    <property type="entry name" value="LIPOPROTEIN SIGNAL PEPTIDASE"/>
    <property type="match status" value="1"/>
</dbReference>
<dbReference type="PANTHER" id="PTHR33695:SF1">
    <property type="entry name" value="LIPOPROTEIN SIGNAL PEPTIDASE"/>
    <property type="match status" value="1"/>
</dbReference>
<dbReference type="Pfam" id="PF01252">
    <property type="entry name" value="Peptidase_A8"/>
    <property type="match status" value="1"/>
</dbReference>
<dbReference type="PRINTS" id="PR00781">
    <property type="entry name" value="LIPOSIGPTASE"/>
</dbReference>
<dbReference type="PROSITE" id="PS00855">
    <property type="entry name" value="SPASE_II"/>
    <property type="match status" value="1"/>
</dbReference>
<gene>
    <name evidence="1" type="primary">lspA</name>
    <name type="ordered locus">LL0997</name>
    <name type="ORF">L0335</name>
</gene>
<comment type="function">
    <text evidence="1">This protein specifically catalyzes the removal of signal peptides from prolipoproteins.</text>
</comment>
<comment type="catalytic activity">
    <reaction evidence="1">
        <text>Release of signal peptides from bacterial membrane prolipoproteins. Hydrolyzes -Xaa-Yaa-Zaa-|-(S,diacylglyceryl)Cys-, in which Xaa is hydrophobic (preferably Leu), and Yaa (Ala or Ser) and Zaa (Gly or Ala) have small, neutral side chains.</text>
        <dbReference type="EC" id="3.4.23.36"/>
    </reaction>
</comment>
<comment type="pathway">
    <text evidence="1">Protein modification; lipoprotein biosynthesis (signal peptide cleavage).</text>
</comment>
<comment type="subcellular location">
    <subcellularLocation>
        <location evidence="1">Cell membrane</location>
        <topology evidence="1">Multi-pass membrane protein</topology>
    </subcellularLocation>
</comment>
<comment type="similarity">
    <text evidence="1 2">Belongs to the peptidase A8 family.</text>
</comment>
<evidence type="ECO:0000255" key="1">
    <source>
        <dbReference type="HAMAP-Rule" id="MF_00161"/>
    </source>
</evidence>
<evidence type="ECO:0000305" key="2"/>
<proteinExistence type="inferred from homology"/>
<keyword id="KW-0064">Aspartyl protease</keyword>
<keyword id="KW-1003">Cell membrane</keyword>
<keyword id="KW-0378">Hydrolase</keyword>
<keyword id="KW-0472">Membrane</keyword>
<keyword id="KW-0645">Protease</keyword>
<keyword id="KW-1185">Reference proteome</keyword>
<keyword id="KW-0812">Transmembrane</keyword>
<keyword id="KW-1133">Transmembrane helix</keyword>
<sequence length="150" mass="17131">MKKLLSLVIIVVGIVADQIFKNWIVANIQLGDTEKIWPNVLSLTYIKNDGAAWSSFSGQQWFFLILTPIVLVVALWFLWKKMAQNWYFIGLTLIIAGALGNFIDRIRQGFVVDMFQTEFINFPIFNIADILLSVGFVLLFIAILTDKETK</sequence>
<name>LSPA_LACLA</name>
<accession>Q9CGU5</accession>
<protein>
    <recommendedName>
        <fullName evidence="1">Lipoprotein signal peptidase</fullName>
        <ecNumber evidence="1">3.4.23.36</ecNumber>
    </recommendedName>
    <alternativeName>
        <fullName evidence="1">Prolipoprotein signal peptidase</fullName>
    </alternativeName>
    <alternativeName>
        <fullName evidence="1">Signal peptidase II</fullName>
        <shortName evidence="1">SPase II</shortName>
    </alternativeName>
</protein>
<organism>
    <name type="scientific">Lactococcus lactis subsp. lactis (strain IL1403)</name>
    <name type="common">Streptococcus lactis</name>
    <dbReference type="NCBI Taxonomy" id="272623"/>
    <lineage>
        <taxon>Bacteria</taxon>
        <taxon>Bacillati</taxon>
        <taxon>Bacillota</taxon>
        <taxon>Bacilli</taxon>
        <taxon>Lactobacillales</taxon>
        <taxon>Streptococcaceae</taxon>
        <taxon>Lactococcus</taxon>
    </lineage>
</organism>